<accession>P0AFE6</accession>
<accession>P33606</accession>
<accession>P76487</accession>
<accession>P78182</accession>
<reference key="1">
    <citation type="journal article" date="2001" name="Nature">
        <title>Genome sequence of enterohaemorrhagic Escherichia coli O157:H7.</title>
        <authorList>
            <person name="Perna N.T."/>
            <person name="Plunkett G. III"/>
            <person name="Burland V."/>
            <person name="Mau B."/>
            <person name="Glasner J.D."/>
            <person name="Rose D.J."/>
            <person name="Mayhew G.F."/>
            <person name="Evans P.S."/>
            <person name="Gregor J."/>
            <person name="Kirkpatrick H.A."/>
            <person name="Posfai G."/>
            <person name="Hackett J."/>
            <person name="Klink S."/>
            <person name="Boutin A."/>
            <person name="Shao Y."/>
            <person name="Miller L."/>
            <person name="Grotbeck E.J."/>
            <person name="Davis N.W."/>
            <person name="Lim A."/>
            <person name="Dimalanta E.T."/>
            <person name="Potamousis K."/>
            <person name="Apodaca J."/>
            <person name="Anantharaman T.S."/>
            <person name="Lin J."/>
            <person name="Yen G."/>
            <person name="Schwartz D.C."/>
            <person name="Welch R.A."/>
            <person name="Blattner F.R."/>
        </authorList>
    </citation>
    <scope>NUCLEOTIDE SEQUENCE [LARGE SCALE GENOMIC DNA]</scope>
    <source>
        <strain>O157:H7 / EDL933 / ATCC 700927 / EHEC</strain>
    </source>
</reference>
<reference key="2">
    <citation type="journal article" date="2001" name="DNA Res.">
        <title>Complete genome sequence of enterohemorrhagic Escherichia coli O157:H7 and genomic comparison with a laboratory strain K-12.</title>
        <authorList>
            <person name="Hayashi T."/>
            <person name="Makino K."/>
            <person name="Ohnishi M."/>
            <person name="Kurokawa K."/>
            <person name="Ishii K."/>
            <person name="Yokoyama K."/>
            <person name="Han C.-G."/>
            <person name="Ohtsubo E."/>
            <person name="Nakayama K."/>
            <person name="Murata T."/>
            <person name="Tanaka M."/>
            <person name="Tobe T."/>
            <person name="Iida T."/>
            <person name="Takami H."/>
            <person name="Honda T."/>
            <person name="Sasakawa C."/>
            <person name="Ogasawara N."/>
            <person name="Yasunaga T."/>
            <person name="Kuhara S."/>
            <person name="Shiba T."/>
            <person name="Hattori M."/>
            <person name="Shinagawa H."/>
        </authorList>
    </citation>
    <scope>NUCLEOTIDE SEQUENCE [LARGE SCALE GENOMIC DNA]</scope>
    <source>
        <strain>O157:H7 / Sakai / RIMD 0509952 / EHEC</strain>
    </source>
</reference>
<dbReference type="EC" id="7.1.1.-" evidence="2"/>
<dbReference type="EMBL" id="AE005174">
    <property type="protein sequence ID" value="AAG57408.1"/>
    <property type="molecule type" value="Genomic_DNA"/>
</dbReference>
<dbReference type="EMBL" id="BA000007">
    <property type="protein sequence ID" value="BAB36586.1"/>
    <property type="molecule type" value="Genomic_DNA"/>
</dbReference>
<dbReference type="PIR" id="C91024">
    <property type="entry name" value="C91024"/>
</dbReference>
<dbReference type="PIR" id="D85868">
    <property type="entry name" value="D85868"/>
</dbReference>
<dbReference type="RefSeq" id="NP_311190.1">
    <property type="nucleotide sequence ID" value="NC_002695.1"/>
</dbReference>
<dbReference type="RefSeq" id="WP_000612644.1">
    <property type="nucleotide sequence ID" value="NZ_VOAI01000001.1"/>
</dbReference>
<dbReference type="SMR" id="P0AFE6"/>
<dbReference type="STRING" id="155864.Z3538"/>
<dbReference type="GeneID" id="916871"/>
<dbReference type="GeneID" id="93033872"/>
<dbReference type="KEGG" id="ece:Z3538"/>
<dbReference type="KEGG" id="ecs:ECs_3163"/>
<dbReference type="PATRIC" id="fig|386585.9.peg.3301"/>
<dbReference type="eggNOG" id="COG0713">
    <property type="taxonomic scope" value="Bacteria"/>
</dbReference>
<dbReference type="HOGENOM" id="CLU_144724_0_1_6"/>
<dbReference type="OMA" id="IPMEHGL"/>
<dbReference type="Proteomes" id="UP000000558">
    <property type="component" value="Chromosome"/>
</dbReference>
<dbReference type="Proteomes" id="UP000002519">
    <property type="component" value="Chromosome"/>
</dbReference>
<dbReference type="GO" id="GO:0030964">
    <property type="term" value="C:NADH dehydrogenase complex"/>
    <property type="evidence" value="ECO:0007669"/>
    <property type="project" value="TreeGrafter"/>
</dbReference>
<dbReference type="GO" id="GO:0005886">
    <property type="term" value="C:plasma membrane"/>
    <property type="evidence" value="ECO:0007669"/>
    <property type="project" value="UniProtKB-SubCell"/>
</dbReference>
<dbReference type="GO" id="GO:0050136">
    <property type="term" value="F:NADH:ubiquinone reductase (non-electrogenic) activity"/>
    <property type="evidence" value="ECO:0007669"/>
    <property type="project" value="UniProtKB-UniRule"/>
</dbReference>
<dbReference type="GO" id="GO:0048038">
    <property type="term" value="F:quinone binding"/>
    <property type="evidence" value="ECO:0007669"/>
    <property type="project" value="UniProtKB-KW"/>
</dbReference>
<dbReference type="GO" id="GO:0042773">
    <property type="term" value="P:ATP synthesis coupled electron transport"/>
    <property type="evidence" value="ECO:0007669"/>
    <property type="project" value="InterPro"/>
</dbReference>
<dbReference type="FunFam" id="1.10.287.3510:FF:000001">
    <property type="entry name" value="NADH-quinone oxidoreductase subunit K"/>
    <property type="match status" value="1"/>
</dbReference>
<dbReference type="Gene3D" id="1.10.287.3510">
    <property type="match status" value="1"/>
</dbReference>
<dbReference type="HAMAP" id="MF_01456">
    <property type="entry name" value="NDH1_NuoK"/>
    <property type="match status" value="1"/>
</dbReference>
<dbReference type="InterPro" id="IPR001133">
    <property type="entry name" value="NADH_UbQ_OxRdtase_chain4L/K"/>
</dbReference>
<dbReference type="InterPro" id="IPR039428">
    <property type="entry name" value="NUOK/Mnh_C1-like"/>
</dbReference>
<dbReference type="NCBIfam" id="NF004319">
    <property type="entry name" value="PRK05715.1-1"/>
    <property type="match status" value="1"/>
</dbReference>
<dbReference type="NCBIfam" id="NF004320">
    <property type="entry name" value="PRK05715.1-2"/>
    <property type="match status" value="1"/>
</dbReference>
<dbReference type="PANTHER" id="PTHR11434:SF16">
    <property type="entry name" value="NADH-UBIQUINONE OXIDOREDUCTASE CHAIN 4L"/>
    <property type="match status" value="1"/>
</dbReference>
<dbReference type="PANTHER" id="PTHR11434">
    <property type="entry name" value="NADH-UBIQUINONE OXIDOREDUCTASE SUBUNIT ND4L"/>
    <property type="match status" value="1"/>
</dbReference>
<dbReference type="Pfam" id="PF00420">
    <property type="entry name" value="Oxidored_q2"/>
    <property type="match status" value="1"/>
</dbReference>
<keyword id="KW-0997">Cell inner membrane</keyword>
<keyword id="KW-1003">Cell membrane</keyword>
<keyword id="KW-0472">Membrane</keyword>
<keyword id="KW-0520">NAD</keyword>
<keyword id="KW-0874">Quinone</keyword>
<keyword id="KW-1185">Reference proteome</keyword>
<keyword id="KW-1278">Translocase</keyword>
<keyword id="KW-0812">Transmembrane</keyword>
<keyword id="KW-1133">Transmembrane helix</keyword>
<keyword id="KW-0813">Transport</keyword>
<keyword id="KW-0830">Ubiquinone</keyword>
<organism>
    <name type="scientific">Escherichia coli O157:H7</name>
    <dbReference type="NCBI Taxonomy" id="83334"/>
    <lineage>
        <taxon>Bacteria</taxon>
        <taxon>Pseudomonadati</taxon>
        <taxon>Pseudomonadota</taxon>
        <taxon>Gammaproteobacteria</taxon>
        <taxon>Enterobacterales</taxon>
        <taxon>Enterobacteriaceae</taxon>
        <taxon>Escherichia</taxon>
    </lineage>
</organism>
<protein>
    <recommendedName>
        <fullName evidence="2">NADH-quinone oxidoreductase subunit K</fullName>
        <ecNumber evidence="2">7.1.1.-</ecNumber>
    </recommendedName>
    <alternativeName>
        <fullName evidence="2">NADH dehydrogenase I subunit K</fullName>
    </alternativeName>
    <alternativeName>
        <fullName evidence="2">NDH-1 subunit K</fullName>
    </alternativeName>
</protein>
<feature type="chain" id="PRO_0000118525" description="NADH-quinone oxidoreductase subunit K">
    <location>
        <begin position="1"/>
        <end position="100"/>
    </location>
</feature>
<feature type="topological domain" description="Periplasmic" evidence="1">
    <location>
        <begin position="1"/>
        <end position="3"/>
    </location>
</feature>
<feature type="transmembrane region" description="Helical" evidence="2">
    <location>
        <begin position="4"/>
        <end position="24"/>
    </location>
</feature>
<feature type="topological domain" description="Cytoplasmic" evidence="1">
    <location>
        <begin position="25"/>
        <end position="27"/>
    </location>
</feature>
<feature type="transmembrane region" description="Helical" evidence="2">
    <location>
        <begin position="28"/>
        <end position="48"/>
    </location>
</feature>
<feature type="topological domain" description="Periplasmic" evidence="1">
    <location>
        <begin position="49"/>
        <end position="59"/>
    </location>
</feature>
<feature type="transmembrane region" description="Helical" evidence="2">
    <location>
        <begin position="60"/>
        <end position="80"/>
    </location>
</feature>
<feature type="topological domain" description="Cytoplasmic" evidence="1">
    <location>
        <begin position="81"/>
        <end position="100"/>
    </location>
</feature>
<proteinExistence type="inferred from homology"/>
<sequence length="100" mass="10845">MIPLQHGLILAAILFVLGLTGLVIRRNLLFMLIGLEIMINASALAFVVAGSYWGQTDGQVMYILAISLAAAEASIGLALLLQLHRRRQNLNIDSVSEMRG</sequence>
<name>NUOK_ECO57</name>
<comment type="function">
    <text evidence="2">NDH-1 shuttles electrons from NADH, via FMN and iron-sulfur (Fe-S) centers, to quinones in the respiratory chain. The immediate electron acceptor for the enzyme in this species is believed to be ubiquinone. Couples the redox reaction to proton translocation (for every two electrons transferred, four hydrogen ions are translocated across the cytoplasmic membrane), and thus conserves the redox energy in a proton gradient.</text>
</comment>
<comment type="catalytic activity">
    <reaction evidence="2">
        <text>a quinone + NADH + 5 H(+)(in) = a quinol + NAD(+) + 4 H(+)(out)</text>
        <dbReference type="Rhea" id="RHEA:57888"/>
        <dbReference type="ChEBI" id="CHEBI:15378"/>
        <dbReference type="ChEBI" id="CHEBI:24646"/>
        <dbReference type="ChEBI" id="CHEBI:57540"/>
        <dbReference type="ChEBI" id="CHEBI:57945"/>
        <dbReference type="ChEBI" id="CHEBI:132124"/>
    </reaction>
</comment>
<comment type="subunit">
    <text evidence="2">NDH-1 is composed of 13 different subunits. Subunits NuoA, H, J, K, L, M, N constitute the membrane sector of the complex.</text>
</comment>
<comment type="subcellular location">
    <subcellularLocation>
        <location evidence="2">Cell inner membrane</location>
        <topology evidence="2">Multi-pass membrane protein</topology>
    </subcellularLocation>
</comment>
<comment type="similarity">
    <text evidence="2">Belongs to the complex I subunit 4L family.</text>
</comment>
<evidence type="ECO:0000255" key="1"/>
<evidence type="ECO:0000255" key="2">
    <source>
        <dbReference type="HAMAP-Rule" id="MF_01456"/>
    </source>
</evidence>
<gene>
    <name evidence="2" type="primary">nuoK</name>
    <name type="ordered locus">Z3538</name>
    <name type="ordered locus">ECs3163</name>
</gene>